<evidence type="ECO:0000255" key="1">
    <source>
        <dbReference type="HAMAP-Rule" id="MF_00082"/>
    </source>
</evidence>
<evidence type="ECO:0000305" key="2"/>
<protein>
    <recommendedName>
        <fullName evidence="1">Acetylglutamate kinase</fullName>
        <ecNumber evidence="1">2.7.2.8</ecNumber>
    </recommendedName>
    <alternativeName>
        <fullName evidence="1">N-acetyl-L-glutamate 5-phosphotransferase</fullName>
    </alternativeName>
    <alternativeName>
        <fullName evidence="1">NAG kinase</fullName>
        <shortName evidence="1">NAGK</shortName>
    </alternativeName>
</protein>
<reference key="1">
    <citation type="submission" date="2008-01" db="EMBL/GenBank/DDBJ databases">
        <title>Complete sequence of Shewanella halifaxensis HAW-EB4.</title>
        <authorList>
            <consortium name="US DOE Joint Genome Institute"/>
            <person name="Copeland A."/>
            <person name="Lucas S."/>
            <person name="Lapidus A."/>
            <person name="Glavina del Rio T."/>
            <person name="Dalin E."/>
            <person name="Tice H."/>
            <person name="Bruce D."/>
            <person name="Goodwin L."/>
            <person name="Pitluck S."/>
            <person name="Sims D."/>
            <person name="Brettin T."/>
            <person name="Detter J.C."/>
            <person name="Han C."/>
            <person name="Kuske C.R."/>
            <person name="Schmutz J."/>
            <person name="Larimer F."/>
            <person name="Land M."/>
            <person name="Hauser L."/>
            <person name="Kyrpides N."/>
            <person name="Kim E."/>
            <person name="Zhao J.-S."/>
            <person name="Richardson P."/>
        </authorList>
    </citation>
    <scope>NUCLEOTIDE SEQUENCE [LARGE SCALE GENOMIC DNA]</scope>
    <source>
        <strain>HAW-EB4</strain>
    </source>
</reference>
<dbReference type="EC" id="2.7.2.8" evidence="1"/>
<dbReference type="EMBL" id="CP000931">
    <property type="protein sequence ID" value="ABZ78632.1"/>
    <property type="status" value="ALT_INIT"/>
    <property type="molecule type" value="Genomic_DNA"/>
</dbReference>
<dbReference type="SMR" id="B0TL87"/>
<dbReference type="STRING" id="458817.Shal_4092"/>
<dbReference type="KEGG" id="shl:Shal_4092"/>
<dbReference type="eggNOG" id="COG0548">
    <property type="taxonomic scope" value="Bacteria"/>
</dbReference>
<dbReference type="HOGENOM" id="CLU_053680_1_1_6"/>
<dbReference type="OrthoDB" id="5915023at2"/>
<dbReference type="UniPathway" id="UPA00068">
    <property type="reaction ID" value="UER00107"/>
</dbReference>
<dbReference type="Proteomes" id="UP000001317">
    <property type="component" value="Chromosome"/>
</dbReference>
<dbReference type="GO" id="GO:0005737">
    <property type="term" value="C:cytoplasm"/>
    <property type="evidence" value="ECO:0007669"/>
    <property type="project" value="UniProtKB-SubCell"/>
</dbReference>
<dbReference type="GO" id="GO:0003991">
    <property type="term" value="F:acetylglutamate kinase activity"/>
    <property type="evidence" value="ECO:0007669"/>
    <property type="project" value="UniProtKB-UniRule"/>
</dbReference>
<dbReference type="GO" id="GO:0005524">
    <property type="term" value="F:ATP binding"/>
    <property type="evidence" value="ECO:0007669"/>
    <property type="project" value="UniProtKB-UniRule"/>
</dbReference>
<dbReference type="GO" id="GO:0042450">
    <property type="term" value="P:arginine biosynthetic process via ornithine"/>
    <property type="evidence" value="ECO:0007669"/>
    <property type="project" value="UniProtKB-UniRule"/>
</dbReference>
<dbReference type="GO" id="GO:0006526">
    <property type="term" value="P:L-arginine biosynthetic process"/>
    <property type="evidence" value="ECO:0007669"/>
    <property type="project" value="UniProtKB-UniPathway"/>
</dbReference>
<dbReference type="Gene3D" id="3.40.1160.10">
    <property type="entry name" value="Acetylglutamate kinase-like"/>
    <property type="match status" value="1"/>
</dbReference>
<dbReference type="HAMAP" id="MF_00082">
    <property type="entry name" value="ArgB"/>
    <property type="match status" value="1"/>
</dbReference>
<dbReference type="InterPro" id="IPR036393">
    <property type="entry name" value="AceGlu_kinase-like_sf"/>
</dbReference>
<dbReference type="InterPro" id="IPR004662">
    <property type="entry name" value="AcgluKinase_fam"/>
</dbReference>
<dbReference type="InterPro" id="IPR037528">
    <property type="entry name" value="ArgB"/>
</dbReference>
<dbReference type="InterPro" id="IPR001048">
    <property type="entry name" value="Asp/Glu/Uridylate_kinase"/>
</dbReference>
<dbReference type="NCBIfam" id="TIGR00761">
    <property type="entry name" value="argB"/>
    <property type="match status" value="1"/>
</dbReference>
<dbReference type="PANTHER" id="PTHR23342">
    <property type="entry name" value="N-ACETYLGLUTAMATE SYNTHASE"/>
    <property type="match status" value="1"/>
</dbReference>
<dbReference type="PANTHER" id="PTHR23342:SF0">
    <property type="entry name" value="N-ACETYLGLUTAMATE SYNTHASE, MITOCHONDRIAL"/>
    <property type="match status" value="1"/>
</dbReference>
<dbReference type="Pfam" id="PF00696">
    <property type="entry name" value="AA_kinase"/>
    <property type="match status" value="1"/>
</dbReference>
<dbReference type="PIRSF" id="PIRSF000728">
    <property type="entry name" value="NAGK"/>
    <property type="match status" value="1"/>
</dbReference>
<dbReference type="SUPFAM" id="SSF53633">
    <property type="entry name" value="Carbamate kinase-like"/>
    <property type="match status" value="1"/>
</dbReference>
<sequence>MANTRAISSGAKPVMVLKVGGALLQCEMGMARLMEAAAKIIANGQPIIMVHGGGCLVDEQLKANGMTTKKLDGLRVTPQEQIPVIVGALAGTSNKTLQAAAIKAGVTSLGMSLADAGMMSAKVKDPQLGLVGEVEPKDASYLEFVLSKGWMPIVSSIAISEQGEMLNVNADQAATALAKLVSGSLVLLSDVSGVLDGKGQLISSLNRAQVNELTKIGVIEKGMKVKVEAALDVAESMGQAVQIASWRHAQQLIALSRGETVGTQIQPQIQ</sequence>
<feature type="chain" id="PRO_0000335663" description="Acetylglutamate kinase">
    <location>
        <begin position="1"/>
        <end position="270"/>
    </location>
</feature>
<feature type="binding site" evidence="1">
    <location>
        <begin position="53"/>
        <end position="54"/>
    </location>
    <ligand>
        <name>substrate</name>
    </ligand>
</feature>
<feature type="binding site" evidence="1">
    <location>
        <position position="75"/>
    </location>
    <ligand>
        <name>substrate</name>
    </ligand>
</feature>
<feature type="binding site" evidence="1">
    <location>
        <position position="167"/>
    </location>
    <ligand>
        <name>substrate</name>
    </ligand>
</feature>
<feature type="site" description="Transition state stabilizer" evidence="1">
    <location>
        <position position="18"/>
    </location>
</feature>
<feature type="site" description="Transition state stabilizer" evidence="1">
    <location>
        <position position="226"/>
    </location>
</feature>
<comment type="function">
    <text evidence="1">Catalyzes the ATP-dependent phosphorylation of N-acetyl-L-glutamate.</text>
</comment>
<comment type="catalytic activity">
    <reaction evidence="1">
        <text>N-acetyl-L-glutamate + ATP = N-acetyl-L-glutamyl 5-phosphate + ADP</text>
        <dbReference type="Rhea" id="RHEA:14629"/>
        <dbReference type="ChEBI" id="CHEBI:30616"/>
        <dbReference type="ChEBI" id="CHEBI:44337"/>
        <dbReference type="ChEBI" id="CHEBI:57936"/>
        <dbReference type="ChEBI" id="CHEBI:456216"/>
        <dbReference type="EC" id="2.7.2.8"/>
    </reaction>
</comment>
<comment type="pathway">
    <text evidence="1">Amino-acid biosynthesis; L-arginine biosynthesis; N(2)-acetyl-L-ornithine from L-glutamate: step 2/4.</text>
</comment>
<comment type="subcellular location">
    <subcellularLocation>
        <location evidence="1">Cytoplasm</location>
    </subcellularLocation>
</comment>
<comment type="similarity">
    <text evidence="1">Belongs to the acetylglutamate kinase family. ArgB subfamily.</text>
</comment>
<comment type="sequence caution" evidence="2">
    <conflict type="erroneous initiation">
        <sequence resource="EMBL-CDS" id="ABZ78632"/>
    </conflict>
</comment>
<organism>
    <name type="scientific">Shewanella halifaxensis (strain HAW-EB4)</name>
    <dbReference type="NCBI Taxonomy" id="458817"/>
    <lineage>
        <taxon>Bacteria</taxon>
        <taxon>Pseudomonadati</taxon>
        <taxon>Pseudomonadota</taxon>
        <taxon>Gammaproteobacteria</taxon>
        <taxon>Alteromonadales</taxon>
        <taxon>Shewanellaceae</taxon>
        <taxon>Shewanella</taxon>
    </lineage>
</organism>
<keyword id="KW-0028">Amino-acid biosynthesis</keyword>
<keyword id="KW-0055">Arginine biosynthesis</keyword>
<keyword id="KW-0067">ATP-binding</keyword>
<keyword id="KW-0963">Cytoplasm</keyword>
<keyword id="KW-0418">Kinase</keyword>
<keyword id="KW-0547">Nucleotide-binding</keyword>
<keyword id="KW-0808">Transferase</keyword>
<gene>
    <name evidence="1" type="primary">argB</name>
    <name type="ordered locus">Shal_4092</name>
</gene>
<accession>B0TL87</accession>
<proteinExistence type="inferred from homology"/>
<name>ARGB_SHEHH</name>